<reference key="1">
    <citation type="journal article" date="2003" name="PLoS Biol.">
        <title>The genome sequence of Caenorhabditis briggsae: a platform for comparative genomics.</title>
        <authorList>
            <person name="Stein L.D."/>
            <person name="Bao Z."/>
            <person name="Blasiar D."/>
            <person name="Blumenthal T."/>
            <person name="Brent M.R."/>
            <person name="Chen N."/>
            <person name="Chinwalla A."/>
            <person name="Clarke L."/>
            <person name="Clee C."/>
            <person name="Coghlan A."/>
            <person name="Coulson A."/>
            <person name="D'Eustachio P."/>
            <person name="Fitch D.H.A."/>
            <person name="Fulton L.A."/>
            <person name="Fulton R.E."/>
            <person name="Griffiths-Jones S."/>
            <person name="Harris T.W."/>
            <person name="Hillier L.W."/>
            <person name="Kamath R."/>
            <person name="Kuwabara P.E."/>
            <person name="Mardis E.R."/>
            <person name="Marra M.A."/>
            <person name="Miner T.L."/>
            <person name="Minx P."/>
            <person name="Mullikin J.C."/>
            <person name="Plumb R.W."/>
            <person name="Rogers J."/>
            <person name="Schein J.E."/>
            <person name="Sohrmann M."/>
            <person name="Spieth J."/>
            <person name="Stajich J.E."/>
            <person name="Wei C."/>
            <person name="Willey D."/>
            <person name="Wilson R.K."/>
            <person name="Durbin R.M."/>
            <person name="Waterston R.H."/>
        </authorList>
    </citation>
    <scope>NUCLEOTIDE SEQUENCE [LARGE SCALE GENOMIC DNA]</scope>
    <source>
        <strain>AF16</strain>
    </source>
</reference>
<accession>Q60J38</accession>
<accession>A8WLA2</accession>
<accession>E3CTU8</accession>
<keyword id="KW-0040">ANK repeat</keyword>
<keyword id="KW-0175">Coiled coil</keyword>
<keyword id="KW-0963">Cytoplasm</keyword>
<keyword id="KW-1185">Reference proteome</keyword>
<keyword id="KW-0677">Repeat</keyword>
<keyword id="KW-0694">RNA-binding</keyword>
<gene>
    <name evidence="5" type="primary">mask-1</name>
    <name evidence="5" type="ORF">CBG24701</name>
</gene>
<sequence length="2636" mass="289786">MAHLIAFDHLIPFEMDLHNEENPDYEEKRLRAFSTFYHFGAKLYECLRTVAVLMEEDGDSMPVAEVLRHLGHEHLLSADIQYPPVAHIIDVIEERCLDDTQVLFKISDLLEDHKLEKPEDFLPYSPDPQKIPVDVAADTVTAVASMCYHFLATSFSEEVMRMSSPETARDPIPLESECLKLAIRTGSKKTETIKISDAEPESKPNYRHKPPVVSLELQQNAMLLLATRLGIEQFLILSKECGKLQFEGNHLSRITPLMEAAASSSEMIVELLLDYGMDPNAQSVPNCNTALIYAAATDDRDMVEVILEHEGPHKVDVYLINNYYRDAIMEAAIGESLDTLSLFLEMGYEPKTLKEADETKNDNSPLIFAAMKGFLDIATVILDYQDKNQQKTEEQTREIAEERYCALMEAAMEGQIAACKLLILRGTPTEGFKSNLPSPMMLACAGGFPELVEILLAAGARIDETGPHKNTCLIEACDGVSGDQVSVVRMLLNRHADVNAMNPESGDTPMSLAARHGNIAIMKMLYEKGADLTTGKITPIVEASIETHLECVQFILAHCKTIPQEQLSRALFAAAEGGCLKIVEELVRAGADLNFEQDERTAIMKAARFNHFDIVQYLVYKGASVNFKSAKNDATALSLACTYGNMDIAQFLIRNGADPMLRMDDGVNCFMEAAKHGSFDLMKLLVEFTKGNMDLDKSPPKLGINRCKTNKKKKKSQLRFQSSQILAMLNGKPSSERPFSSTEADMFSHLLKCQQQMVEINIDQSSDIITDPTDVEFLQKAVEGIQEAYGFTPEGQINFPRKPSKADMDSLYQGLLVPNIKMWAETIAHGWMTMERKVGRPIEFNSFRISPEVQIENALSAIQALTAVASGLDNPAYLKSVFNKMNNGEEIPRVPATVGSMNAASAALTGIGIHPDDALRLFAGNTFAKRAFRSSFFLLYHFSANPDDCVHEQYVAVHYMQEGPFRAALLKLDSMYRERKGAAISVQNMVSNFPIDAHQSNPPPAQQTGPKTTSLTTPQPDESNGATTIEHPTTPQIVFKSGGDKTMEALDPMKVYPGVLKLAADMERLYRANQTDVSREIAVTTAYIASTLPEKYSQEFNVESGDRILKRLLSGMSEKQRAAVMTRVKSTINSESGTNLLQRSVGTLSDKRLKEEYIKLFRETADTAFYDKSNRDKGSQQLKAAEQKKGKTSAANVGSQVRLIFLIARSKLLILQISAAGKLLMGKPANNTQVQQQQGQQQQGQLRRTHSEGDGTERAKARSNVIDKATDSTLETPLSIACSNGHREVVELLLKEGANIEHRDKKGFTPLIIAATYGHAPIVEVLLKNHAAIEAQSDRTKDTALSLACTAGRKDVVEMLLAHGANKEHRNVSDYTPLSLASSSGFLDIVNLLLTAGSEINSRTGSKLGISPLMLAAMNGHKETTKVLLEKGSDINAQIETNSYLFYRNTALTLASFQGRFEVVKLLLCYNANVEHRAKTGLTPLMECASGGYVDVGNLLIENGADPNASPVQSTKDTALTIAAEKGHEKFVQMLLDNDVIYDIRNKKGCSALWLACNGGHLGTAQALVFKGADTDMFDNRKMSPMVAAFRKGHIEIIKFLVGHAKQFPNETDLVRMQSTLECADLVARCGECIIIIRNAKKAQAETAEETANRLLQLIDDEKERDINKKQKIKDKKKQKKEAKKKFQAEQEQLSAPPSKPEPVVAPEPEPEPETEPVEEPAFEPTPPPVEEPPKEPPKPRRNRRKTNPDGVPKGSKPAAEQAVKPPPPPVAEEEPEPAELPYRPIVVKIPSPATVQAPMMSPGSYSESEDWQKAGKEGKKVRPKREGRGTAPSSAGSSQAKHRSNTSSISERQHSWEVDTKGVKAYEFTVPGKIVSRVIGKSGSNINAVREATLAQIEIDKLCGSKEDDRHITVRGSADVVSMAVNIIHLLIYDKDVLIHDAIRTATHGNVSVASSLSSEGTSKSAVDSTHSIPHSLSSASIARQSSPVPVPSQCNRSSKSHGNQATKDGANVWQQRMAARGETPPTQTQTKQQPTPSPQVQQPARQTASPAVRQSLAQSSVPQATENVTKPTQTPPASVQQPIDRVIAPPARREPAQVVQPVPPVHQHTPVPQQRPQEVAQPPRFPDPISRPAVSLQQHMQQIQQQPTFSKAPGTRLSNEFSRAPGPPVQPQTPPQSLPSRNDVFEDRLPFTAFKPTAPAPAPVTSIAPSTSTATSTASNGATLDDFDISKLRMYEDSRVQSIWGTDRTNGEEDTWGGLFTNLLQPNSTASSLNTATTKNDTSDWGSNDFMSQLLAGTSNQKTSSAPQQPVSSVNSQLSALETKGWMPSTATPPTARDPVQRQVPLFARSQSSNPSTLQHQQQQQRIMQDPHQSHLHQVMQQQHHSRIPQQFQQPQFSSQSHPSQSSMMPSTQQQLLSQLQAMNLGQQGSNPYDMLAHQLSMHRQENSSSVPGPSQPSANPYYSPSYTDSSVLGQLNMNTLSQRGIKQFDGFNNDQSQSSDGVIAALFNEQQQQKKNQQAGYMQQGQQSFGSTQRIGMMQPAPPPFVPQQAPGAPPGFGDLNRSASGSSQNRPMYPGYGAQQPQPFSQLTQADWDQRLLLQQQQQQRSSQQQQNPTNQGLPQKWSNTWNSSSRM</sequence>
<protein>
    <recommendedName>
        <fullName>Ankyrin repeat and KH domain-containing protein CBG24701</fullName>
    </recommendedName>
</protein>
<name>ANKHM_CAEBR</name>
<dbReference type="EMBL" id="HE601238">
    <property type="protein sequence ID" value="CBX33004.1"/>
    <property type="molecule type" value="Genomic_DNA"/>
</dbReference>
<dbReference type="SMR" id="Q60J38"/>
<dbReference type="FunCoup" id="Q60J38">
    <property type="interactions" value="2126"/>
</dbReference>
<dbReference type="STRING" id="6238.Q60J38"/>
<dbReference type="WormBase" id="CBG24701a">
    <property type="protein sequence ID" value="CBP46150"/>
    <property type="gene ID" value="WBGene00042750"/>
    <property type="gene designation" value="Cbr-mask-1"/>
</dbReference>
<dbReference type="eggNOG" id="KOG4369">
    <property type="taxonomic scope" value="Eukaryota"/>
</dbReference>
<dbReference type="HOGENOM" id="CLU_000785_0_0_1"/>
<dbReference type="InParanoid" id="Q60J38"/>
<dbReference type="OMA" id="NDNGHCA"/>
<dbReference type="Proteomes" id="UP000008549">
    <property type="component" value="Unassembled WGS sequence"/>
</dbReference>
<dbReference type="GO" id="GO:0005737">
    <property type="term" value="C:cytoplasm"/>
    <property type="evidence" value="ECO:0007669"/>
    <property type="project" value="UniProtKB-SubCell"/>
</dbReference>
<dbReference type="GO" id="GO:0003723">
    <property type="term" value="F:RNA binding"/>
    <property type="evidence" value="ECO:0007669"/>
    <property type="project" value="UniProtKB-KW"/>
</dbReference>
<dbReference type="CDD" id="cd22404">
    <property type="entry name" value="KH-I_MASK"/>
    <property type="match status" value="1"/>
</dbReference>
<dbReference type="FunFam" id="1.25.40.20:FF:000131">
    <property type="entry name" value="ankyrin repeat domain-containing protein 17 isoform X1"/>
    <property type="match status" value="1"/>
</dbReference>
<dbReference type="Gene3D" id="1.25.40.20">
    <property type="entry name" value="Ankyrin repeat-containing domain"/>
    <property type="match status" value="7"/>
</dbReference>
<dbReference type="Gene3D" id="3.30.1370.10">
    <property type="entry name" value="K Homology domain, type 1"/>
    <property type="match status" value="1"/>
</dbReference>
<dbReference type="InterPro" id="IPR051631">
    <property type="entry name" value="Ankyrin-KH/SAM_domain"/>
</dbReference>
<dbReference type="InterPro" id="IPR002110">
    <property type="entry name" value="Ankyrin_rpt"/>
</dbReference>
<dbReference type="InterPro" id="IPR036770">
    <property type="entry name" value="Ankyrin_rpt-contain_sf"/>
</dbReference>
<dbReference type="InterPro" id="IPR047373">
    <property type="entry name" value="KH-I_MASK"/>
</dbReference>
<dbReference type="InterPro" id="IPR004087">
    <property type="entry name" value="KH_dom"/>
</dbReference>
<dbReference type="InterPro" id="IPR004088">
    <property type="entry name" value="KH_dom_type_1"/>
</dbReference>
<dbReference type="InterPro" id="IPR036612">
    <property type="entry name" value="KH_dom_type_1_sf"/>
</dbReference>
<dbReference type="PANTHER" id="PTHR23206:SF8">
    <property type="entry name" value="ANKYRIN REPEAT AND KH DOMAIN-CONTAINING 1"/>
    <property type="match status" value="1"/>
</dbReference>
<dbReference type="PANTHER" id="PTHR23206">
    <property type="entry name" value="MASK PROTEIN"/>
    <property type="match status" value="1"/>
</dbReference>
<dbReference type="Pfam" id="PF00023">
    <property type="entry name" value="Ank"/>
    <property type="match status" value="1"/>
</dbReference>
<dbReference type="Pfam" id="PF12796">
    <property type="entry name" value="Ank_2"/>
    <property type="match status" value="8"/>
</dbReference>
<dbReference type="Pfam" id="PF13606">
    <property type="entry name" value="Ank_3"/>
    <property type="match status" value="1"/>
</dbReference>
<dbReference type="Pfam" id="PF00013">
    <property type="entry name" value="KH_1"/>
    <property type="match status" value="1"/>
</dbReference>
<dbReference type="SMART" id="SM00248">
    <property type="entry name" value="ANK"/>
    <property type="match status" value="24"/>
</dbReference>
<dbReference type="SMART" id="SM00322">
    <property type="entry name" value="KH"/>
    <property type="match status" value="1"/>
</dbReference>
<dbReference type="SUPFAM" id="SSF48403">
    <property type="entry name" value="Ankyrin repeat"/>
    <property type="match status" value="3"/>
</dbReference>
<dbReference type="SUPFAM" id="SSF54791">
    <property type="entry name" value="Eukaryotic type KH-domain (KH-domain type I)"/>
    <property type="match status" value="1"/>
</dbReference>
<dbReference type="PROSITE" id="PS50297">
    <property type="entry name" value="ANK_REP_REGION"/>
    <property type="match status" value="2"/>
</dbReference>
<dbReference type="PROSITE" id="PS50088">
    <property type="entry name" value="ANK_REPEAT"/>
    <property type="match status" value="13"/>
</dbReference>
<dbReference type="PROSITE" id="PS50084">
    <property type="entry name" value="KH_TYPE_1"/>
    <property type="match status" value="1"/>
</dbReference>
<proteinExistence type="inferred from homology"/>
<comment type="subcellular location">
    <subcellularLocation>
        <location evidence="1">Cytoplasm</location>
    </subcellularLocation>
</comment>
<comment type="similarity">
    <text evidence="2">Belongs to the mask family.</text>
</comment>
<evidence type="ECO:0000250" key="1">
    <source>
        <dbReference type="UniProtKB" id="Q9VCA8"/>
    </source>
</evidence>
<evidence type="ECO:0000255" key="2"/>
<evidence type="ECO:0000255" key="3">
    <source>
        <dbReference type="PROSITE-ProRule" id="PRU00117"/>
    </source>
</evidence>
<evidence type="ECO:0000256" key="4">
    <source>
        <dbReference type="SAM" id="MobiDB-lite"/>
    </source>
</evidence>
<evidence type="ECO:0000312" key="5">
    <source>
        <dbReference type="WormBase" id="CBG24701a"/>
    </source>
</evidence>
<organism>
    <name type="scientific">Caenorhabditis briggsae</name>
    <dbReference type="NCBI Taxonomy" id="6238"/>
    <lineage>
        <taxon>Eukaryota</taxon>
        <taxon>Metazoa</taxon>
        <taxon>Ecdysozoa</taxon>
        <taxon>Nematoda</taxon>
        <taxon>Chromadorea</taxon>
        <taxon>Rhabditida</taxon>
        <taxon>Rhabditina</taxon>
        <taxon>Rhabditomorpha</taxon>
        <taxon>Rhabditoidea</taxon>
        <taxon>Rhabditidae</taxon>
        <taxon>Peloderinae</taxon>
        <taxon>Caenorhabditis</taxon>
    </lineage>
</organism>
<feature type="chain" id="PRO_0000312831" description="Ankyrin repeat and KH domain-containing protein CBG24701">
    <location>
        <begin position="1"/>
        <end position="2636"/>
    </location>
</feature>
<feature type="repeat" description="ANK 1">
    <location>
        <begin position="252"/>
        <end position="281"/>
    </location>
</feature>
<feature type="repeat" description="ANK 2">
    <location>
        <begin position="286"/>
        <end position="317"/>
    </location>
</feature>
<feature type="repeat" description="ANK 3">
    <location>
        <begin position="361"/>
        <end position="390"/>
    </location>
</feature>
<feature type="repeat" description="ANK 4">
    <location>
        <begin position="435"/>
        <end position="464"/>
    </location>
</feature>
<feature type="repeat" description="ANK 5">
    <location>
        <begin position="468"/>
        <end position="500"/>
    </location>
</feature>
<feature type="repeat" description="ANK 6">
    <location>
        <begin position="505"/>
        <end position="534"/>
    </location>
</feature>
<feature type="repeat" description="ANK 7">
    <location>
        <begin position="536"/>
        <end position="564"/>
    </location>
</feature>
<feature type="repeat" description="ANK 8">
    <location>
        <begin position="566"/>
        <end position="595"/>
    </location>
</feature>
<feature type="repeat" description="ANK 9">
    <location>
        <begin position="598"/>
        <end position="627"/>
    </location>
</feature>
<feature type="repeat" description="ANK 10">
    <location>
        <begin position="632"/>
        <end position="661"/>
    </location>
</feature>
<feature type="repeat" description="ANK 11">
    <location>
        <begin position="665"/>
        <end position="695"/>
    </location>
</feature>
<feature type="repeat" description="ANK 12">
    <location>
        <begin position="1273"/>
        <end position="1302"/>
    </location>
</feature>
<feature type="repeat" description="ANK 13">
    <location>
        <begin position="1306"/>
        <end position="1335"/>
    </location>
</feature>
<feature type="repeat" description="ANK 14">
    <location>
        <begin position="1340"/>
        <end position="1369"/>
    </location>
</feature>
<feature type="repeat" description="ANK 15">
    <location>
        <begin position="1373"/>
        <end position="1402"/>
    </location>
</feature>
<feature type="repeat" description="ANK 16">
    <location>
        <begin position="1408"/>
        <end position="1437"/>
    </location>
</feature>
<feature type="repeat" description="ANK 17">
    <location>
        <begin position="1447"/>
        <end position="1476"/>
    </location>
</feature>
<feature type="repeat" description="ANK 18">
    <location>
        <begin position="1480"/>
        <end position="1509"/>
    </location>
</feature>
<feature type="repeat" description="ANK 19">
    <location>
        <begin position="1515"/>
        <end position="1546"/>
    </location>
</feature>
<feature type="repeat" description="ANK 20">
    <location>
        <begin position="1548"/>
        <end position="1577"/>
    </location>
</feature>
<feature type="repeat" description="ANK 21">
    <location>
        <begin position="1581"/>
        <end position="1610"/>
    </location>
</feature>
<feature type="domain" description="KH" evidence="3">
    <location>
        <begin position="1864"/>
        <end position="1929"/>
    </location>
</feature>
<feature type="region of interest" description="Disordered" evidence="4">
    <location>
        <begin position="994"/>
        <end position="1030"/>
    </location>
</feature>
<feature type="region of interest" description="Disordered" evidence="4">
    <location>
        <begin position="1172"/>
        <end position="1191"/>
    </location>
</feature>
<feature type="region of interest" description="Disordered" evidence="4">
    <location>
        <begin position="1230"/>
        <end position="1268"/>
    </location>
</feature>
<feature type="region of interest" description="Disordered" evidence="4">
    <location>
        <begin position="1669"/>
        <end position="1857"/>
    </location>
</feature>
<feature type="region of interest" description="Disordered" evidence="4">
    <location>
        <begin position="1980"/>
        <end position="2182"/>
    </location>
</feature>
<feature type="region of interest" description="Disordered" evidence="4">
    <location>
        <begin position="2196"/>
        <end position="2221"/>
    </location>
</feature>
<feature type="region of interest" description="Disordered" evidence="4">
    <location>
        <begin position="2269"/>
        <end position="2292"/>
    </location>
</feature>
<feature type="region of interest" description="Disordered" evidence="4">
    <location>
        <begin position="2301"/>
        <end position="2320"/>
    </location>
</feature>
<feature type="region of interest" description="Disordered" evidence="4">
    <location>
        <begin position="2352"/>
        <end position="2417"/>
    </location>
</feature>
<feature type="region of interest" description="Disordered" evidence="4">
    <location>
        <begin position="2444"/>
        <end position="2465"/>
    </location>
</feature>
<feature type="region of interest" description="Disordered" evidence="4">
    <location>
        <begin position="2539"/>
        <end position="2636"/>
    </location>
</feature>
<feature type="coiled-coil region" evidence="2">
    <location>
        <begin position="1638"/>
        <end position="1696"/>
    </location>
</feature>
<feature type="compositionally biased region" description="Polar residues" evidence="4">
    <location>
        <begin position="1006"/>
        <end position="1030"/>
    </location>
</feature>
<feature type="compositionally biased region" description="Low complexity" evidence="4">
    <location>
        <begin position="1233"/>
        <end position="1245"/>
    </location>
</feature>
<feature type="compositionally biased region" description="Basic and acidic residues" evidence="4">
    <location>
        <begin position="1249"/>
        <end position="1260"/>
    </location>
</feature>
<feature type="compositionally biased region" description="Basic residues" evidence="4">
    <location>
        <begin position="1670"/>
        <end position="1686"/>
    </location>
</feature>
<feature type="compositionally biased region" description="Pro residues" evidence="4">
    <location>
        <begin position="1698"/>
        <end position="1708"/>
    </location>
</feature>
<feature type="compositionally biased region" description="Acidic residues" evidence="4">
    <location>
        <begin position="1709"/>
        <end position="1722"/>
    </location>
</feature>
<feature type="compositionally biased region" description="Basic and acidic residues" evidence="4">
    <location>
        <begin position="1811"/>
        <end position="1829"/>
    </location>
</feature>
<feature type="compositionally biased region" description="Polar residues" evidence="4">
    <location>
        <begin position="1832"/>
        <end position="1851"/>
    </location>
</feature>
<feature type="compositionally biased region" description="Polar residues" evidence="4">
    <location>
        <begin position="1994"/>
        <end position="2008"/>
    </location>
</feature>
<feature type="compositionally biased region" description="Low complexity" evidence="4">
    <location>
        <begin position="2025"/>
        <end position="2045"/>
    </location>
</feature>
<feature type="compositionally biased region" description="Polar residues" evidence="4">
    <location>
        <begin position="2057"/>
        <end position="2083"/>
    </location>
</feature>
<feature type="compositionally biased region" description="Low complexity" evidence="4">
    <location>
        <begin position="2099"/>
        <end position="2119"/>
    </location>
</feature>
<feature type="compositionally biased region" description="Low complexity" evidence="4">
    <location>
        <begin position="2139"/>
        <end position="2148"/>
    </location>
</feature>
<feature type="compositionally biased region" description="Pro residues" evidence="4">
    <location>
        <begin position="2167"/>
        <end position="2179"/>
    </location>
</feature>
<feature type="compositionally biased region" description="Low complexity" evidence="4">
    <location>
        <begin position="2269"/>
        <end position="2280"/>
    </location>
</feature>
<feature type="compositionally biased region" description="Polar residues" evidence="4">
    <location>
        <begin position="2281"/>
        <end position="2292"/>
    </location>
</feature>
<feature type="compositionally biased region" description="Low complexity" evidence="4">
    <location>
        <begin position="2361"/>
        <end position="2373"/>
    </location>
</feature>
<feature type="compositionally biased region" description="Low complexity" evidence="4">
    <location>
        <begin position="2391"/>
        <end position="2417"/>
    </location>
</feature>
<feature type="compositionally biased region" description="Polar residues" evidence="4">
    <location>
        <begin position="2449"/>
        <end position="2465"/>
    </location>
</feature>
<feature type="compositionally biased region" description="Polar residues" evidence="4">
    <location>
        <begin position="2565"/>
        <end position="2574"/>
    </location>
</feature>
<feature type="compositionally biased region" description="Polar residues" evidence="4">
    <location>
        <begin position="2583"/>
        <end position="2595"/>
    </location>
</feature>
<feature type="compositionally biased region" description="Low complexity" evidence="4">
    <location>
        <begin position="2599"/>
        <end position="2615"/>
    </location>
</feature>
<feature type="compositionally biased region" description="Polar residues" evidence="4">
    <location>
        <begin position="2616"/>
        <end position="2636"/>
    </location>
</feature>